<dbReference type="EC" id="2.3.1.181" evidence="1"/>
<dbReference type="EMBL" id="CP001074">
    <property type="protein sequence ID" value="ACE91287.1"/>
    <property type="molecule type" value="Genomic_DNA"/>
</dbReference>
<dbReference type="SMR" id="B3PP01"/>
<dbReference type="KEGG" id="rec:RHECIAT_CH0002333"/>
<dbReference type="eggNOG" id="COG0321">
    <property type="taxonomic scope" value="Bacteria"/>
</dbReference>
<dbReference type="HOGENOM" id="CLU_035168_3_0_5"/>
<dbReference type="UniPathway" id="UPA00538">
    <property type="reaction ID" value="UER00592"/>
</dbReference>
<dbReference type="Proteomes" id="UP000008817">
    <property type="component" value="Chromosome"/>
</dbReference>
<dbReference type="GO" id="GO:0005737">
    <property type="term" value="C:cytoplasm"/>
    <property type="evidence" value="ECO:0007669"/>
    <property type="project" value="UniProtKB-SubCell"/>
</dbReference>
<dbReference type="GO" id="GO:0033819">
    <property type="term" value="F:lipoyl(octanoyl) transferase activity"/>
    <property type="evidence" value="ECO:0007669"/>
    <property type="project" value="UniProtKB-EC"/>
</dbReference>
<dbReference type="GO" id="GO:0036211">
    <property type="term" value="P:protein modification process"/>
    <property type="evidence" value="ECO:0007669"/>
    <property type="project" value="InterPro"/>
</dbReference>
<dbReference type="CDD" id="cd16444">
    <property type="entry name" value="LipB"/>
    <property type="match status" value="1"/>
</dbReference>
<dbReference type="Gene3D" id="3.30.930.10">
    <property type="entry name" value="Bira Bifunctional Protein, Domain 2"/>
    <property type="match status" value="1"/>
</dbReference>
<dbReference type="HAMAP" id="MF_00013">
    <property type="entry name" value="LipB"/>
    <property type="match status" value="1"/>
</dbReference>
<dbReference type="InterPro" id="IPR045864">
    <property type="entry name" value="aa-tRNA-synth_II/BPL/LPL"/>
</dbReference>
<dbReference type="InterPro" id="IPR004143">
    <property type="entry name" value="BPL_LPL_catalytic"/>
</dbReference>
<dbReference type="InterPro" id="IPR000544">
    <property type="entry name" value="Octanoyltransferase"/>
</dbReference>
<dbReference type="InterPro" id="IPR020605">
    <property type="entry name" value="Octanoyltransferase_CS"/>
</dbReference>
<dbReference type="NCBIfam" id="TIGR00214">
    <property type="entry name" value="lipB"/>
    <property type="match status" value="1"/>
</dbReference>
<dbReference type="NCBIfam" id="NF010921">
    <property type="entry name" value="PRK14341.1"/>
    <property type="match status" value="1"/>
</dbReference>
<dbReference type="PANTHER" id="PTHR10993:SF7">
    <property type="entry name" value="LIPOYLTRANSFERASE 2, MITOCHONDRIAL-RELATED"/>
    <property type="match status" value="1"/>
</dbReference>
<dbReference type="PANTHER" id="PTHR10993">
    <property type="entry name" value="OCTANOYLTRANSFERASE"/>
    <property type="match status" value="1"/>
</dbReference>
<dbReference type="Pfam" id="PF21948">
    <property type="entry name" value="LplA-B_cat"/>
    <property type="match status" value="1"/>
</dbReference>
<dbReference type="PIRSF" id="PIRSF016262">
    <property type="entry name" value="LPLase"/>
    <property type="match status" value="1"/>
</dbReference>
<dbReference type="SUPFAM" id="SSF55681">
    <property type="entry name" value="Class II aaRS and biotin synthetases"/>
    <property type="match status" value="1"/>
</dbReference>
<dbReference type="PROSITE" id="PS51733">
    <property type="entry name" value="BPL_LPL_CATALYTIC"/>
    <property type="match status" value="1"/>
</dbReference>
<dbReference type="PROSITE" id="PS01313">
    <property type="entry name" value="LIPB"/>
    <property type="match status" value="1"/>
</dbReference>
<gene>
    <name evidence="1" type="primary">lipB</name>
    <name type="ordered locus">RHECIAT_CH0002333</name>
</gene>
<keyword id="KW-0012">Acyltransferase</keyword>
<keyword id="KW-0963">Cytoplasm</keyword>
<keyword id="KW-0808">Transferase</keyword>
<evidence type="ECO:0000255" key="1">
    <source>
        <dbReference type="HAMAP-Rule" id="MF_00013"/>
    </source>
</evidence>
<evidence type="ECO:0000255" key="2">
    <source>
        <dbReference type="PROSITE-ProRule" id="PRU01067"/>
    </source>
</evidence>
<feature type="chain" id="PRO_1000089474" description="Octanoyltransferase">
    <location>
        <begin position="1"/>
        <end position="239"/>
    </location>
</feature>
<feature type="domain" description="BPL/LPL catalytic" evidence="2">
    <location>
        <begin position="48"/>
        <end position="236"/>
    </location>
</feature>
<feature type="active site" description="Acyl-thioester intermediate" evidence="1">
    <location>
        <position position="198"/>
    </location>
</feature>
<feature type="binding site" evidence="1">
    <location>
        <begin position="87"/>
        <end position="94"/>
    </location>
    <ligand>
        <name>substrate</name>
    </ligand>
</feature>
<feature type="binding site" evidence="1">
    <location>
        <begin position="167"/>
        <end position="169"/>
    </location>
    <ligand>
        <name>substrate</name>
    </ligand>
</feature>
<feature type="binding site" evidence="1">
    <location>
        <begin position="180"/>
        <end position="182"/>
    </location>
    <ligand>
        <name>substrate</name>
    </ligand>
</feature>
<feature type="site" description="Lowers pKa of active site Cys" evidence="1">
    <location>
        <position position="164"/>
    </location>
</feature>
<comment type="function">
    <text evidence="1">Catalyzes the transfer of endogenously produced octanoic acid from octanoyl-acyl-carrier-protein onto the lipoyl domains of lipoate-dependent enzymes. Lipoyl-ACP can also act as a substrate although octanoyl-ACP is likely to be the physiological substrate.</text>
</comment>
<comment type="catalytic activity">
    <reaction evidence="1">
        <text>octanoyl-[ACP] + L-lysyl-[protein] = N(6)-octanoyl-L-lysyl-[protein] + holo-[ACP] + H(+)</text>
        <dbReference type="Rhea" id="RHEA:17665"/>
        <dbReference type="Rhea" id="RHEA-COMP:9636"/>
        <dbReference type="Rhea" id="RHEA-COMP:9685"/>
        <dbReference type="Rhea" id="RHEA-COMP:9752"/>
        <dbReference type="Rhea" id="RHEA-COMP:9928"/>
        <dbReference type="ChEBI" id="CHEBI:15378"/>
        <dbReference type="ChEBI" id="CHEBI:29969"/>
        <dbReference type="ChEBI" id="CHEBI:64479"/>
        <dbReference type="ChEBI" id="CHEBI:78463"/>
        <dbReference type="ChEBI" id="CHEBI:78809"/>
        <dbReference type="EC" id="2.3.1.181"/>
    </reaction>
</comment>
<comment type="pathway">
    <text evidence="1">Protein modification; protein lipoylation via endogenous pathway; protein N(6)-(lipoyl)lysine from octanoyl-[acyl-carrier-protein]: step 1/2.</text>
</comment>
<comment type="subcellular location">
    <subcellularLocation>
        <location evidence="1">Cytoplasm</location>
    </subcellularLocation>
</comment>
<comment type="miscellaneous">
    <text evidence="1">In the reaction, the free carboxyl group of octanoic acid is attached via an amide linkage to the epsilon-amino group of a specific lysine residue of lipoyl domains of lipoate-dependent enzymes.</text>
</comment>
<comment type="similarity">
    <text evidence="1">Belongs to the LipB family.</text>
</comment>
<protein>
    <recommendedName>
        <fullName evidence="1">Octanoyltransferase</fullName>
        <ecNumber evidence="1">2.3.1.181</ecNumber>
    </recommendedName>
    <alternativeName>
        <fullName evidence="1">Lipoate-protein ligase B</fullName>
    </alternativeName>
    <alternativeName>
        <fullName evidence="1">Lipoyl/octanoyl transferase</fullName>
    </alternativeName>
    <alternativeName>
        <fullName evidence="1">Octanoyl-[acyl-carrier-protein]-protein N-octanoyltransferase</fullName>
    </alternativeName>
</protein>
<accession>B3PP01</accession>
<name>LIPB_RHIE6</name>
<proteinExistence type="inferred from homology"/>
<organism>
    <name type="scientific">Rhizobium etli (strain CIAT 652)</name>
    <dbReference type="NCBI Taxonomy" id="491916"/>
    <lineage>
        <taxon>Bacteria</taxon>
        <taxon>Pseudomonadati</taxon>
        <taxon>Pseudomonadota</taxon>
        <taxon>Alphaproteobacteria</taxon>
        <taxon>Hyphomicrobiales</taxon>
        <taxon>Rhizobiaceae</taxon>
        <taxon>Rhizobium/Agrobacterium group</taxon>
        <taxon>Rhizobium</taxon>
    </lineage>
</organism>
<reference key="1">
    <citation type="journal article" date="2010" name="Appl. Environ. Microbiol.">
        <title>Conserved symbiotic plasmid DNA sequences in the multireplicon pangenomic structure of Rhizobium etli.</title>
        <authorList>
            <person name="Gonzalez V."/>
            <person name="Acosta J.L."/>
            <person name="Santamaria R.I."/>
            <person name="Bustos P."/>
            <person name="Fernandez J.L."/>
            <person name="Hernandez Gonzalez I.L."/>
            <person name="Diaz R."/>
            <person name="Flores M."/>
            <person name="Palacios R."/>
            <person name="Mora J."/>
            <person name="Davila G."/>
        </authorList>
    </citation>
    <scope>NUCLEOTIDE SEQUENCE [LARGE SCALE GENOMIC DNA]</scope>
    <source>
        <strain>CIAT 652</strain>
    </source>
</reference>
<sequence>MAMLRTDLEFSMLPKLDSRPVRWRIADGLVAYEEAVVAMEREVAAIAEGGDELVWLVEHPPLYTAGTSANAGDLVQPDRFPVFATGRGGEYTYHGPGQRVAYVMLDLKRRRQDVRAFVAALEEVVIRTLDMMNVRGERREDRVGVWVRRPEKPMLADGTMAEDKIAALGIRLRKWVTFHGLSLNVDPNLDHFSGIVPCGISAYGVTSLVDLGLPVMMADVDIRLRAAFETVFGETVNEP</sequence>